<comment type="cofactor">
    <cofactor evidence="1">
        <name>FAD</name>
        <dbReference type="ChEBI" id="CHEBI:57692"/>
    </cofactor>
    <text evidence="1">Binds 1 FAD per subunit.</text>
</comment>
<comment type="similarity">
    <text evidence="2">Belongs to the NADH dehydrogenase family.</text>
</comment>
<gene>
    <name type="primary">yutJ</name>
    <name type="ordered locus">BSU32200</name>
</gene>
<feature type="chain" id="PRO_0000379983" description="NADH dehydrogenase-like protein YutJ">
    <location>
        <begin position="1"/>
        <end position="355"/>
    </location>
</feature>
<evidence type="ECO:0000250" key="1"/>
<evidence type="ECO:0000305" key="2"/>
<organism>
    <name type="scientific">Bacillus subtilis (strain 168)</name>
    <dbReference type="NCBI Taxonomy" id="224308"/>
    <lineage>
        <taxon>Bacteria</taxon>
        <taxon>Bacillati</taxon>
        <taxon>Bacillota</taxon>
        <taxon>Bacilli</taxon>
        <taxon>Bacillales</taxon>
        <taxon>Bacillaceae</taxon>
        <taxon>Bacillus</taxon>
    </lineage>
</organism>
<sequence length="355" mass="39604">MKKLVLIGGGYGNMRVLHRLLPNQLPDDVSITLIDRNPYHCLKTEYYALAAGTISDHHIRVSFPEHPRLDVQYGDITSIDIVQKQVLFQDREPISYDDAIIGLGCEDKYHNVPGAPEFTYSIQTIDQSRETYQKLNNLSANATVAIVGAGLSGVELASELRESRDDLNIILFDRGNLILSSFPERLSKYVQKWFEEHGVRIINRANITKVEEGVVYNHDDPISADAIVWTAGIQPNKVVRDLDVEKDAQGRIVLTPHHNLPGDEHLYVVGDCASLPHAPSAQLAEAQAEQIVQILQKRWNGEALPESMPQFKLKGVLGSLGKKAGFGLVADRPLIGRVPRMLKSGLLWMYKHHNG</sequence>
<reference key="1">
    <citation type="journal article" date="1997" name="Nature">
        <title>The complete genome sequence of the Gram-positive bacterium Bacillus subtilis.</title>
        <authorList>
            <person name="Kunst F."/>
            <person name="Ogasawara N."/>
            <person name="Moszer I."/>
            <person name="Albertini A.M."/>
            <person name="Alloni G."/>
            <person name="Azevedo V."/>
            <person name="Bertero M.G."/>
            <person name="Bessieres P."/>
            <person name="Bolotin A."/>
            <person name="Borchert S."/>
            <person name="Borriss R."/>
            <person name="Boursier L."/>
            <person name="Brans A."/>
            <person name="Braun M."/>
            <person name="Brignell S.C."/>
            <person name="Bron S."/>
            <person name="Brouillet S."/>
            <person name="Bruschi C.V."/>
            <person name="Caldwell B."/>
            <person name="Capuano V."/>
            <person name="Carter N.M."/>
            <person name="Choi S.-K."/>
            <person name="Codani J.-J."/>
            <person name="Connerton I.F."/>
            <person name="Cummings N.J."/>
            <person name="Daniel R.A."/>
            <person name="Denizot F."/>
            <person name="Devine K.M."/>
            <person name="Duesterhoeft A."/>
            <person name="Ehrlich S.D."/>
            <person name="Emmerson P.T."/>
            <person name="Entian K.-D."/>
            <person name="Errington J."/>
            <person name="Fabret C."/>
            <person name="Ferrari E."/>
            <person name="Foulger D."/>
            <person name="Fritz C."/>
            <person name="Fujita M."/>
            <person name="Fujita Y."/>
            <person name="Fuma S."/>
            <person name="Galizzi A."/>
            <person name="Galleron N."/>
            <person name="Ghim S.-Y."/>
            <person name="Glaser P."/>
            <person name="Goffeau A."/>
            <person name="Golightly E.J."/>
            <person name="Grandi G."/>
            <person name="Guiseppi G."/>
            <person name="Guy B.J."/>
            <person name="Haga K."/>
            <person name="Haiech J."/>
            <person name="Harwood C.R."/>
            <person name="Henaut A."/>
            <person name="Hilbert H."/>
            <person name="Holsappel S."/>
            <person name="Hosono S."/>
            <person name="Hullo M.-F."/>
            <person name="Itaya M."/>
            <person name="Jones L.-M."/>
            <person name="Joris B."/>
            <person name="Karamata D."/>
            <person name="Kasahara Y."/>
            <person name="Klaerr-Blanchard M."/>
            <person name="Klein C."/>
            <person name="Kobayashi Y."/>
            <person name="Koetter P."/>
            <person name="Koningstein G."/>
            <person name="Krogh S."/>
            <person name="Kumano M."/>
            <person name="Kurita K."/>
            <person name="Lapidus A."/>
            <person name="Lardinois S."/>
            <person name="Lauber J."/>
            <person name="Lazarevic V."/>
            <person name="Lee S.-M."/>
            <person name="Levine A."/>
            <person name="Liu H."/>
            <person name="Masuda S."/>
            <person name="Mauel C."/>
            <person name="Medigue C."/>
            <person name="Medina N."/>
            <person name="Mellado R.P."/>
            <person name="Mizuno M."/>
            <person name="Moestl D."/>
            <person name="Nakai S."/>
            <person name="Noback M."/>
            <person name="Noone D."/>
            <person name="O'Reilly M."/>
            <person name="Ogawa K."/>
            <person name="Ogiwara A."/>
            <person name="Oudega B."/>
            <person name="Park S.-H."/>
            <person name="Parro V."/>
            <person name="Pohl T.M."/>
            <person name="Portetelle D."/>
            <person name="Porwollik S."/>
            <person name="Prescott A.M."/>
            <person name="Presecan E."/>
            <person name="Pujic P."/>
            <person name="Purnelle B."/>
            <person name="Rapoport G."/>
            <person name="Rey M."/>
            <person name="Reynolds S."/>
            <person name="Rieger M."/>
            <person name="Rivolta C."/>
            <person name="Rocha E."/>
            <person name="Roche B."/>
            <person name="Rose M."/>
            <person name="Sadaie Y."/>
            <person name="Sato T."/>
            <person name="Scanlan E."/>
            <person name="Schleich S."/>
            <person name="Schroeter R."/>
            <person name="Scoffone F."/>
            <person name="Sekiguchi J."/>
            <person name="Sekowska A."/>
            <person name="Seror S.J."/>
            <person name="Serror P."/>
            <person name="Shin B.-S."/>
            <person name="Soldo B."/>
            <person name="Sorokin A."/>
            <person name="Tacconi E."/>
            <person name="Takagi T."/>
            <person name="Takahashi H."/>
            <person name="Takemaru K."/>
            <person name="Takeuchi M."/>
            <person name="Tamakoshi A."/>
            <person name="Tanaka T."/>
            <person name="Terpstra P."/>
            <person name="Tognoni A."/>
            <person name="Tosato V."/>
            <person name="Uchiyama S."/>
            <person name="Vandenbol M."/>
            <person name="Vannier F."/>
            <person name="Vassarotti A."/>
            <person name="Viari A."/>
            <person name="Wambutt R."/>
            <person name="Wedler E."/>
            <person name="Wedler H."/>
            <person name="Weitzenegger T."/>
            <person name="Winters P."/>
            <person name="Wipat A."/>
            <person name="Yamamoto H."/>
            <person name="Yamane K."/>
            <person name="Yasumoto K."/>
            <person name="Yata K."/>
            <person name="Yoshida K."/>
            <person name="Yoshikawa H.-F."/>
            <person name="Zumstein E."/>
            <person name="Yoshikawa H."/>
            <person name="Danchin A."/>
        </authorList>
    </citation>
    <scope>NUCLEOTIDE SEQUENCE [LARGE SCALE GENOMIC DNA]</scope>
    <source>
        <strain>168</strain>
    </source>
</reference>
<reference key="2">
    <citation type="journal article" date="2009" name="Microbiology">
        <title>From a consortium sequence to a unified sequence: the Bacillus subtilis 168 reference genome a decade later.</title>
        <authorList>
            <person name="Barbe V."/>
            <person name="Cruveiller S."/>
            <person name="Kunst F."/>
            <person name="Lenoble P."/>
            <person name="Meurice G."/>
            <person name="Sekowska A."/>
            <person name="Vallenet D."/>
            <person name="Wang T."/>
            <person name="Moszer I."/>
            <person name="Medigue C."/>
            <person name="Danchin A."/>
        </authorList>
    </citation>
    <scope>SEQUENCE REVISION TO C-TERMINUS</scope>
</reference>
<proteinExistence type="inferred from homology"/>
<accession>O32117</accession>
<dbReference type="EC" id="1.6.-.-"/>
<dbReference type="EMBL" id="AL009126">
    <property type="protein sequence ID" value="CAB15210.2"/>
    <property type="molecule type" value="Genomic_DNA"/>
</dbReference>
<dbReference type="RefSeq" id="NP_391100.2">
    <property type="nucleotide sequence ID" value="NC_000964.3"/>
</dbReference>
<dbReference type="RefSeq" id="WP_003242518.1">
    <property type="nucleotide sequence ID" value="NZ_OZ025638.1"/>
</dbReference>
<dbReference type="SMR" id="O32117"/>
<dbReference type="FunCoup" id="O32117">
    <property type="interactions" value="44"/>
</dbReference>
<dbReference type="STRING" id="224308.BSU32200"/>
<dbReference type="PaxDb" id="224308-BSU32200"/>
<dbReference type="EnsemblBacteria" id="CAB15210">
    <property type="protein sequence ID" value="CAB15210"/>
    <property type="gene ID" value="BSU_32200"/>
</dbReference>
<dbReference type="GeneID" id="936600"/>
<dbReference type="KEGG" id="bsu:BSU32200"/>
<dbReference type="PATRIC" id="fig|224308.179.peg.3486"/>
<dbReference type="eggNOG" id="COG1252">
    <property type="taxonomic scope" value="Bacteria"/>
</dbReference>
<dbReference type="InParanoid" id="O32117"/>
<dbReference type="OrthoDB" id="9784880at2"/>
<dbReference type="PhylomeDB" id="O32117"/>
<dbReference type="BioCyc" id="BSUB:BSU32200-MONOMER"/>
<dbReference type="Proteomes" id="UP000001570">
    <property type="component" value="Chromosome"/>
</dbReference>
<dbReference type="GO" id="GO:0016491">
    <property type="term" value="F:oxidoreductase activity"/>
    <property type="evidence" value="ECO:0000318"/>
    <property type="project" value="GO_Central"/>
</dbReference>
<dbReference type="Gene3D" id="3.50.50.100">
    <property type="match status" value="1"/>
</dbReference>
<dbReference type="InterPro" id="IPR036188">
    <property type="entry name" value="FAD/NAD-bd_sf"/>
</dbReference>
<dbReference type="InterPro" id="IPR023753">
    <property type="entry name" value="FAD/NAD-binding_dom"/>
</dbReference>
<dbReference type="InterPro" id="IPR051169">
    <property type="entry name" value="NADH-Q_oxidoreductase"/>
</dbReference>
<dbReference type="PANTHER" id="PTHR42913:SF3">
    <property type="entry name" value="64 KDA MITOCHONDRIAL NADH DEHYDROGENASE (EUROFUNG)"/>
    <property type="match status" value="1"/>
</dbReference>
<dbReference type="PANTHER" id="PTHR42913">
    <property type="entry name" value="APOPTOSIS-INDUCING FACTOR 1"/>
    <property type="match status" value="1"/>
</dbReference>
<dbReference type="Pfam" id="PF07992">
    <property type="entry name" value="Pyr_redox_2"/>
    <property type="match status" value="1"/>
</dbReference>
<dbReference type="PRINTS" id="PR00368">
    <property type="entry name" value="FADPNR"/>
</dbReference>
<dbReference type="PRINTS" id="PR00411">
    <property type="entry name" value="PNDRDTASEI"/>
</dbReference>
<dbReference type="SUPFAM" id="SSF51905">
    <property type="entry name" value="FAD/NAD(P)-binding domain"/>
    <property type="match status" value="1"/>
</dbReference>
<protein>
    <recommendedName>
        <fullName>NADH dehydrogenase-like protein YutJ</fullName>
        <ecNumber>1.6.-.-</ecNumber>
    </recommendedName>
</protein>
<keyword id="KW-0274">FAD</keyword>
<keyword id="KW-0285">Flavoprotein</keyword>
<keyword id="KW-0560">Oxidoreductase</keyword>
<keyword id="KW-1185">Reference proteome</keyword>
<name>YUTJ_BACSU</name>